<accession>Q12365</accession>
<accession>D6W3B6</accession>
<evidence type="ECO:0000255" key="1"/>
<evidence type="ECO:0000256" key="2">
    <source>
        <dbReference type="SAM" id="MobiDB-lite"/>
    </source>
</evidence>
<evidence type="ECO:0000269" key="3">
    <source>
    </source>
</evidence>
<evidence type="ECO:0000269" key="4">
    <source>
    </source>
</evidence>
<evidence type="ECO:0000269" key="5">
    <source>
    </source>
</evidence>
<evidence type="ECO:0000305" key="6"/>
<evidence type="ECO:0007744" key="7">
    <source>
    </source>
</evidence>
<evidence type="ECO:0007744" key="8">
    <source>
    </source>
</evidence>
<evidence type="ECO:0007744" key="9">
    <source>
    </source>
</evidence>
<gene>
    <name type="primary">BBP1</name>
    <name type="ordered locus">YPL255W</name>
    <name type="ORF">P0745</name>
</gene>
<reference key="1">
    <citation type="submission" date="1995-12" db="EMBL/GenBank/DDBJ databases">
        <authorList>
            <person name="Xue Z."/>
            <person name="Shan X."/>
            <person name="Melese T."/>
        </authorList>
    </citation>
    <scope>NUCLEOTIDE SEQUENCE [GENOMIC DNA]</scope>
    <source>
        <strain>ATCC 204508 / S288c</strain>
    </source>
</reference>
<reference key="2">
    <citation type="journal article" date="1997" name="Nature">
        <title>The nucleotide sequence of Saccharomyces cerevisiae chromosome XVI.</title>
        <authorList>
            <person name="Bussey H."/>
            <person name="Storms R.K."/>
            <person name="Ahmed A."/>
            <person name="Albermann K."/>
            <person name="Allen E."/>
            <person name="Ansorge W."/>
            <person name="Araujo R."/>
            <person name="Aparicio A."/>
            <person name="Barrell B.G."/>
            <person name="Badcock K."/>
            <person name="Benes V."/>
            <person name="Botstein D."/>
            <person name="Bowman S."/>
            <person name="Brueckner M."/>
            <person name="Carpenter J."/>
            <person name="Cherry J.M."/>
            <person name="Chung E."/>
            <person name="Churcher C.M."/>
            <person name="Coster F."/>
            <person name="Davis K."/>
            <person name="Davis R.W."/>
            <person name="Dietrich F.S."/>
            <person name="Delius H."/>
            <person name="DiPaolo T."/>
            <person name="Dubois E."/>
            <person name="Duesterhoeft A."/>
            <person name="Duncan M."/>
            <person name="Floeth M."/>
            <person name="Fortin N."/>
            <person name="Friesen J.D."/>
            <person name="Fritz C."/>
            <person name="Goffeau A."/>
            <person name="Hall J."/>
            <person name="Hebling U."/>
            <person name="Heumann K."/>
            <person name="Hilbert H."/>
            <person name="Hillier L.W."/>
            <person name="Hunicke-Smith S."/>
            <person name="Hyman R.W."/>
            <person name="Johnston M."/>
            <person name="Kalman S."/>
            <person name="Kleine K."/>
            <person name="Komp C."/>
            <person name="Kurdi O."/>
            <person name="Lashkari D."/>
            <person name="Lew H."/>
            <person name="Lin A."/>
            <person name="Lin D."/>
            <person name="Louis E.J."/>
            <person name="Marathe R."/>
            <person name="Messenguy F."/>
            <person name="Mewes H.-W."/>
            <person name="Mirtipati S."/>
            <person name="Moestl D."/>
            <person name="Mueller-Auer S."/>
            <person name="Namath A."/>
            <person name="Nentwich U."/>
            <person name="Oefner P."/>
            <person name="Pearson D."/>
            <person name="Petel F.X."/>
            <person name="Pohl T.M."/>
            <person name="Purnelle B."/>
            <person name="Rajandream M.A."/>
            <person name="Rechmann S."/>
            <person name="Rieger M."/>
            <person name="Riles L."/>
            <person name="Roberts D."/>
            <person name="Schaefer M."/>
            <person name="Scharfe M."/>
            <person name="Scherens B."/>
            <person name="Schramm S."/>
            <person name="Schroeder M."/>
            <person name="Sdicu A.-M."/>
            <person name="Tettelin H."/>
            <person name="Urrestarazu L.A."/>
            <person name="Ushinsky S."/>
            <person name="Vierendeels F."/>
            <person name="Vissers S."/>
            <person name="Voss H."/>
            <person name="Walsh S.V."/>
            <person name="Wambutt R."/>
            <person name="Wang Y."/>
            <person name="Wedler E."/>
            <person name="Wedler H."/>
            <person name="Winnett E."/>
            <person name="Zhong W.-W."/>
            <person name="Zollner A."/>
            <person name="Vo D.H."/>
            <person name="Hani J."/>
        </authorList>
    </citation>
    <scope>NUCLEOTIDE SEQUENCE [LARGE SCALE GENOMIC DNA]</scope>
    <source>
        <strain>ATCC 204508 / S288c</strain>
    </source>
</reference>
<reference key="3">
    <citation type="journal article" date="2014" name="G3 (Bethesda)">
        <title>The reference genome sequence of Saccharomyces cerevisiae: Then and now.</title>
        <authorList>
            <person name="Engel S.R."/>
            <person name="Dietrich F.S."/>
            <person name="Fisk D.G."/>
            <person name="Binkley G."/>
            <person name="Balakrishnan R."/>
            <person name="Costanzo M.C."/>
            <person name="Dwight S.S."/>
            <person name="Hitz B.C."/>
            <person name="Karra K."/>
            <person name="Nash R.S."/>
            <person name="Weng S."/>
            <person name="Wong E.D."/>
            <person name="Lloyd P."/>
            <person name="Skrzypek M.S."/>
            <person name="Miyasato S.R."/>
            <person name="Simison M."/>
            <person name="Cherry J.M."/>
        </authorList>
    </citation>
    <scope>GENOME REANNOTATION</scope>
    <source>
        <strain>ATCC 204508 / S288c</strain>
    </source>
</reference>
<reference key="4">
    <citation type="journal article" date="2007" name="Genome Res.">
        <title>Approaching a complete repository of sequence-verified protein-encoding clones for Saccharomyces cerevisiae.</title>
        <authorList>
            <person name="Hu Y."/>
            <person name="Rolfs A."/>
            <person name="Bhullar B."/>
            <person name="Murthy T.V.S."/>
            <person name="Zhu C."/>
            <person name="Berger M.F."/>
            <person name="Camargo A.A."/>
            <person name="Kelley F."/>
            <person name="McCarron S."/>
            <person name="Jepson D."/>
            <person name="Richardson A."/>
            <person name="Raphael J."/>
            <person name="Moreira D."/>
            <person name="Taycher E."/>
            <person name="Zuo D."/>
            <person name="Mohr S."/>
            <person name="Kane M.F."/>
            <person name="Williamson J."/>
            <person name="Simpson A.J.G."/>
            <person name="Bulyk M.L."/>
            <person name="Harlow E."/>
            <person name="Marsischky G."/>
            <person name="Kolodner R.D."/>
            <person name="LaBaer J."/>
        </authorList>
    </citation>
    <scope>NUCLEOTIDE SEQUENCE [GENOMIC DNA]</scope>
    <source>
        <strain>ATCC 204508 / S288c</strain>
    </source>
</reference>
<reference key="5">
    <citation type="journal article" date="2000" name="EMBO J.">
        <title>The Bbp1p-Mps2p complex connects the SPB to the nuclear envelope and is essential for SPB duplication.</title>
        <authorList>
            <person name="Schramm C."/>
            <person name="Elliott S."/>
            <person name="Shevchenko A."/>
            <person name="Schiebel E."/>
        </authorList>
    </citation>
    <scope>FUNCTION</scope>
    <scope>SUBCELLULAR LOCATION</scope>
    <scope>INTERACTION WITH KAR1; MPS2 AND SPC29</scope>
</reference>
<reference key="6">
    <citation type="journal article" date="2003" name="Nature">
        <title>Global analysis of protein expression in yeast.</title>
        <authorList>
            <person name="Ghaemmaghami S."/>
            <person name="Huh W.-K."/>
            <person name="Bower K."/>
            <person name="Howson R.W."/>
            <person name="Belle A."/>
            <person name="Dephoure N."/>
            <person name="O'Shea E.K."/>
            <person name="Weissman J.S."/>
        </authorList>
    </citation>
    <scope>LEVEL OF PROTEIN EXPRESSION [LARGE SCALE ANALYSIS]</scope>
</reference>
<reference key="7">
    <citation type="journal article" date="2004" name="Mol. Biol. Cell">
        <title>Requirement for Bbp1p in the proper mitotic functions of Cdc5p in Saccharomyces cerevisiae.</title>
        <authorList>
            <person name="Park C.J."/>
            <person name="Song S."/>
            <person name="Giddings T.H. Jr."/>
            <person name="Ro H.S."/>
            <person name="Sakchaisri K."/>
            <person name="Park J.E."/>
            <person name="Seong Y.S."/>
            <person name="Winey M."/>
            <person name="Lee K.S."/>
        </authorList>
    </citation>
    <scope>DOMAIN</scope>
    <scope>SUBCELLULAR LOCATION</scope>
    <scope>SUBUNIT</scope>
    <scope>FUNCTION</scope>
    <scope>INTERACTION WITH CDC5</scope>
</reference>
<reference key="8">
    <citation type="journal article" date="2007" name="J. Proteome Res.">
        <title>Large-scale phosphorylation analysis of alpha-factor-arrested Saccharomyces cerevisiae.</title>
        <authorList>
            <person name="Li X."/>
            <person name="Gerber S.A."/>
            <person name="Rudner A.D."/>
            <person name="Beausoleil S.A."/>
            <person name="Haas W."/>
            <person name="Villen J."/>
            <person name="Elias J.E."/>
            <person name="Gygi S.P."/>
        </authorList>
    </citation>
    <scope>PHOSPHORYLATION [LARGE SCALE ANALYSIS] AT SER-115</scope>
    <scope>IDENTIFICATION BY MASS SPECTROMETRY [LARGE SCALE ANALYSIS]</scope>
    <source>
        <strain>ADR376</strain>
    </source>
</reference>
<reference key="9">
    <citation type="journal article" date="2008" name="Mol. Cell. Proteomics">
        <title>A multidimensional chromatography technology for in-depth phosphoproteome analysis.</title>
        <authorList>
            <person name="Albuquerque C.P."/>
            <person name="Smolka M.B."/>
            <person name="Payne S.H."/>
            <person name="Bafna V."/>
            <person name="Eng J."/>
            <person name="Zhou H."/>
        </authorList>
    </citation>
    <scope>PHOSPHORYLATION [LARGE SCALE ANALYSIS] AT SER-73</scope>
    <scope>IDENTIFICATION BY MASS SPECTROMETRY [LARGE SCALE ANALYSIS]</scope>
</reference>
<reference key="10">
    <citation type="journal article" date="2009" name="Science">
        <title>Global analysis of Cdk1 substrate phosphorylation sites provides insights into evolution.</title>
        <authorList>
            <person name="Holt L.J."/>
            <person name="Tuch B.B."/>
            <person name="Villen J."/>
            <person name="Johnson A.D."/>
            <person name="Gygi S.P."/>
            <person name="Morgan D.O."/>
        </authorList>
    </citation>
    <scope>PHOSPHORYLATION [LARGE SCALE ANALYSIS] AT SER-29 AND SER-73</scope>
    <scope>IDENTIFICATION BY MASS SPECTROMETRY [LARGE SCALE ANALYSIS]</scope>
</reference>
<feature type="chain" id="PRO_0000064840" description="Spindle pole component BBP1">
    <location>
        <begin position="1"/>
        <end position="385"/>
    </location>
</feature>
<feature type="region of interest" description="Disordered" evidence="2">
    <location>
        <begin position="34"/>
        <end position="76"/>
    </location>
</feature>
<feature type="coiled-coil region" evidence="1">
    <location>
        <begin position="229"/>
        <end position="355"/>
    </location>
</feature>
<feature type="compositionally biased region" description="Basic and acidic residues" evidence="2">
    <location>
        <begin position="34"/>
        <end position="48"/>
    </location>
</feature>
<feature type="compositionally biased region" description="Low complexity" evidence="2">
    <location>
        <begin position="64"/>
        <end position="75"/>
    </location>
</feature>
<feature type="modified residue" description="Phosphoserine" evidence="9">
    <location>
        <position position="29"/>
    </location>
</feature>
<feature type="modified residue" description="Phosphoserine" evidence="8 9">
    <location>
        <position position="73"/>
    </location>
</feature>
<feature type="modified residue" description="Phosphoserine" evidence="7">
    <location>
        <position position="115"/>
    </location>
</feature>
<name>BBP1_YEAST</name>
<sequence>MNQEDNTGGGGIFGLFKWTKDALFGTDISPSMKYKDQEERRDRSRYAQDDTNFSMKFGNDSNRRSTNLSRSNSWSGLDSTLHRKYELLPEYNENGFNSIVNGDHHSKERIRSLRSPAPIVPREPLRNEPTDTFGHRLHTKRRTINELSNSQIPFIPPQEDDPLLSKLFNKDGVNEVRRSPYKLSVKDIPGKFPSPLTKRDEIDNYYVRDEDACHKNREYKKAYFDLFAQMDLNSRDLEDLCEDVREQREQFHRNEQTYKQAYEEMRAELVNELKKSKTLFENYYSLGQKYKSLKKVLDQTISHEAELATSRERLYQEEDLKNFEIQTLKQRLSDLELKYTNLQIEKDMQRDNYESEIHDLLLQLSLRNNERKDTSAGSNIFSTGQ</sequence>
<proteinExistence type="evidence at protein level"/>
<comment type="function">
    <text evidence="3 5">Component of the spindle pole body (SPB) required for insertion of the nascent SPB into the nuclear envelope and for the proper execution of spindle pole body (SPB) duplication. Connects the central plaque of the SPB with the half-bridge. Required for proper localization of CDC5 at the SPB and for proper M-phase progression.</text>
</comment>
<comment type="subunit">
    <text evidence="3 5">Homodimer. Interacts with KAR1, MPS2 and SPC29.</text>
</comment>
<comment type="interaction">
    <interactant intactId="EBI-3448">
        <id>Q12365</id>
    </interactant>
    <interactant intactId="EBI-23834">
        <id>P53159</id>
        <label>MPS2</label>
    </interactant>
    <organismsDiffer>false</organismsDiffer>
    <experiments>7</experiments>
</comment>
<comment type="interaction">
    <interactant intactId="EBI-3448">
        <id>Q12365</id>
    </interactant>
    <interactant intactId="EBI-12041">
        <id>P33419</id>
        <label>SPC29</label>
    </interactant>
    <organismsDiffer>false</organismsDiffer>
    <experiments>3</experiments>
</comment>
<comment type="subcellular location">
    <subcellularLocation>
        <location evidence="3 5">Cytoplasm</location>
        <location evidence="3 5">Cytoskeleton</location>
        <location evidence="3 5">Microtubule organizing center</location>
        <location evidence="3 5">Spindle pole body</location>
    </subcellularLocation>
    <text>Associates with the periphary of the central plaque.</text>
</comment>
<comment type="domain">
    <text evidence="5">The C-ter coiled-coil domain is sufficient for localization and homodimerization.</text>
</comment>
<comment type="miscellaneous">
    <text evidence="4">Present with 922 molecules/cell in log phase SD medium.</text>
</comment>
<comment type="similarity">
    <text evidence="6">Belongs to the BBP1 family.</text>
</comment>
<keyword id="KW-0175">Coiled coil</keyword>
<keyword id="KW-0963">Cytoplasm</keyword>
<keyword id="KW-0206">Cytoskeleton</keyword>
<keyword id="KW-0597">Phosphoprotein</keyword>
<keyword id="KW-1185">Reference proteome</keyword>
<dbReference type="EMBL" id="X92658">
    <property type="protein sequence ID" value="CAA63347.1"/>
    <property type="molecule type" value="Genomic_DNA"/>
</dbReference>
<dbReference type="EMBL" id="Z73610">
    <property type="protein sequence ID" value="CAA97980.1"/>
    <property type="molecule type" value="Genomic_DNA"/>
</dbReference>
<dbReference type="EMBL" id="Z73611">
    <property type="protein sequence ID" value="CAA97981.1"/>
    <property type="molecule type" value="Genomic_DNA"/>
</dbReference>
<dbReference type="EMBL" id="AY693019">
    <property type="protein sequence ID" value="AAT93038.1"/>
    <property type="molecule type" value="Genomic_DNA"/>
</dbReference>
<dbReference type="EMBL" id="BK006949">
    <property type="protein sequence ID" value="DAA11182.1"/>
    <property type="molecule type" value="Genomic_DNA"/>
</dbReference>
<dbReference type="PIR" id="S61566">
    <property type="entry name" value="S61566"/>
</dbReference>
<dbReference type="RefSeq" id="NP_015068.1">
    <property type="nucleotide sequence ID" value="NM_001184069.1"/>
</dbReference>
<dbReference type="SMR" id="Q12365"/>
<dbReference type="BioGRID" id="35908">
    <property type="interactions" value="55"/>
</dbReference>
<dbReference type="ComplexPortal" id="CPX-1287">
    <property type="entry name" value="MPS2-BBP1 spindle pole body anchor complex"/>
</dbReference>
<dbReference type="DIP" id="DIP-4418N"/>
<dbReference type="FunCoup" id="Q12365">
    <property type="interactions" value="160"/>
</dbReference>
<dbReference type="IntAct" id="Q12365">
    <property type="interactions" value="18"/>
</dbReference>
<dbReference type="MINT" id="Q12365"/>
<dbReference type="STRING" id="4932.YPL255W"/>
<dbReference type="iPTMnet" id="Q12365"/>
<dbReference type="PaxDb" id="4932-YPL255W"/>
<dbReference type="PeptideAtlas" id="Q12365"/>
<dbReference type="PRIDE" id="Q12365"/>
<dbReference type="EnsemblFungi" id="YPL255W_mRNA">
    <property type="protein sequence ID" value="YPL255W"/>
    <property type="gene ID" value="YPL255W"/>
</dbReference>
<dbReference type="GeneID" id="855820"/>
<dbReference type="KEGG" id="sce:YPL255W"/>
<dbReference type="AGR" id="SGD:S000006176"/>
<dbReference type="SGD" id="S000006176">
    <property type="gene designation" value="BBP1"/>
</dbReference>
<dbReference type="VEuPathDB" id="FungiDB:YPL255W"/>
<dbReference type="eggNOG" id="ENOG502RYZ2">
    <property type="taxonomic scope" value="Eukaryota"/>
</dbReference>
<dbReference type="HOGENOM" id="CLU_711875_0_0_1"/>
<dbReference type="InParanoid" id="Q12365"/>
<dbReference type="OMA" id="WTMDALF"/>
<dbReference type="OrthoDB" id="4042536at2759"/>
<dbReference type="BioCyc" id="YEAST:G3O-34140-MONOMER"/>
<dbReference type="BioGRID-ORCS" id="855820">
    <property type="hits" value="4 hits in 10 CRISPR screens"/>
</dbReference>
<dbReference type="CD-CODE" id="876000F7">
    <property type="entry name" value="Centrosome"/>
</dbReference>
<dbReference type="PRO" id="PR:Q12365"/>
<dbReference type="Proteomes" id="UP000002311">
    <property type="component" value="Chromosome XVI"/>
</dbReference>
<dbReference type="RNAct" id="Q12365">
    <property type="molecule type" value="protein"/>
</dbReference>
<dbReference type="GO" id="GO:0005823">
    <property type="term" value="C:central plaque of spindle pole body"/>
    <property type="evidence" value="ECO:0000314"/>
    <property type="project" value="SGD"/>
</dbReference>
<dbReference type="GO" id="GO:0005737">
    <property type="term" value="C:cytoplasm"/>
    <property type="evidence" value="ECO:0007669"/>
    <property type="project" value="UniProtKB-KW"/>
</dbReference>
<dbReference type="GO" id="GO:0016020">
    <property type="term" value="C:membrane"/>
    <property type="evidence" value="ECO:0000314"/>
    <property type="project" value="ComplexPortal"/>
</dbReference>
<dbReference type="GO" id="GO:0106084">
    <property type="term" value="C:mitotic nuclear membrane microtubule tethering complex"/>
    <property type="evidence" value="ECO:0000353"/>
    <property type="project" value="ComplexPortal"/>
</dbReference>
<dbReference type="GO" id="GO:0005635">
    <property type="term" value="C:nuclear envelope"/>
    <property type="evidence" value="ECO:0000314"/>
    <property type="project" value="ComplexPortal"/>
</dbReference>
<dbReference type="GO" id="GO:0005816">
    <property type="term" value="C:spindle pole body"/>
    <property type="evidence" value="ECO:0000303"/>
    <property type="project" value="ComplexPortal"/>
</dbReference>
<dbReference type="GO" id="GO:0005198">
    <property type="term" value="F:structural molecule activity"/>
    <property type="evidence" value="ECO:0000314"/>
    <property type="project" value="SGD"/>
</dbReference>
<dbReference type="GO" id="GO:1990608">
    <property type="term" value="P:mitotic spindle pole body localization"/>
    <property type="evidence" value="ECO:0000314"/>
    <property type="project" value="ComplexPortal"/>
</dbReference>
<dbReference type="GO" id="GO:0071988">
    <property type="term" value="P:protein localization to spindle pole body"/>
    <property type="evidence" value="ECO:0000315"/>
    <property type="project" value="SGD"/>
</dbReference>
<dbReference type="GO" id="GO:0030474">
    <property type="term" value="P:spindle pole body duplication"/>
    <property type="evidence" value="ECO:0000315"/>
    <property type="project" value="SGD"/>
</dbReference>
<dbReference type="InterPro" id="IPR029330">
    <property type="entry name" value="Bbp1_C"/>
</dbReference>
<dbReference type="InterPro" id="IPR029328">
    <property type="entry name" value="Bbp1_N"/>
</dbReference>
<dbReference type="Pfam" id="PF15272">
    <property type="entry name" value="BBP1_C"/>
    <property type="match status" value="1"/>
</dbReference>
<dbReference type="Pfam" id="PF15271">
    <property type="entry name" value="BBP1_N"/>
    <property type="match status" value="1"/>
</dbReference>
<protein>
    <recommendedName>
        <fullName>Spindle pole component BBP1</fullName>
    </recommendedName>
    <alternativeName>
        <fullName>BFR1-binding protein 1</fullName>
    </alternativeName>
</protein>
<organism>
    <name type="scientific">Saccharomyces cerevisiae (strain ATCC 204508 / S288c)</name>
    <name type="common">Baker's yeast</name>
    <dbReference type="NCBI Taxonomy" id="559292"/>
    <lineage>
        <taxon>Eukaryota</taxon>
        <taxon>Fungi</taxon>
        <taxon>Dikarya</taxon>
        <taxon>Ascomycota</taxon>
        <taxon>Saccharomycotina</taxon>
        <taxon>Saccharomycetes</taxon>
        <taxon>Saccharomycetales</taxon>
        <taxon>Saccharomycetaceae</taxon>
        <taxon>Saccharomyces</taxon>
    </lineage>
</organism>